<name>ZN283_HUMAN</name>
<organism>
    <name type="scientific">Homo sapiens</name>
    <name type="common">Human</name>
    <dbReference type="NCBI Taxonomy" id="9606"/>
    <lineage>
        <taxon>Eukaryota</taxon>
        <taxon>Metazoa</taxon>
        <taxon>Chordata</taxon>
        <taxon>Craniata</taxon>
        <taxon>Vertebrata</taxon>
        <taxon>Euteleostomi</taxon>
        <taxon>Mammalia</taxon>
        <taxon>Eutheria</taxon>
        <taxon>Euarchontoglires</taxon>
        <taxon>Primates</taxon>
        <taxon>Haplorrhini</taxon>
        <taxon>Catarrhini</taxon>
        <taxon>Hominidae</taxon>
        <taxon>Homo</taxon>
    </lineage>
</organism>
<sequence>MESRSVAQAGVQWCDLGSLQAPPPGFTLFSCLSLLSSWDYSSGFSGFCASPIEESHGALISSCNSRTMTDGLVTFRDVAIDFSQEEWECLDPAQRDLYVDVMLENYSNLVSLDLESKTYETKKIFSENDIFEINFSQWEMKDKSKTLGLEASIFRNNWKCKSIFEGLKGHQEGYFSQMIISYEKIPSYRKSKSLTPHQRIHNTEKSYVCKECGKACSHGSKLVQHERTHTAEKHFECKECGKNYLSAYQLNVHQRFHTGEKPYECKECGKTFSWGSSLVKHERIHTGEKPYECKECGKAFSRGYHLTQHQKIHTGVKSYKCKECGKAFFWGSSLAKHEIIHTGEKPYKCKECGKAFSRGYQLTQHQKIHTGKKPYECKICGKAFCWGYQLTRHQIFHTGEKPYECKECGKAFNCGSSLIQHERIHTGEKPYECKECGKAFSRGYHLSQHQKIHTGEKPFECKECGKAFSWGSSLVKHERVHTGEKSHECKECGKTFCSGYQLTRHQVFHTGEKPYECKECGKAFNCGSSLVQHERIHTGEKPYECKECGKAFSRGYHLTQHQKIHTGEKPFKCKECGKAFSWGSSLVKHERVHTNEKSYECKDCGKAFGSGYQLSVHQRFHTGEKLYQRKEFGKTFTCGSKLVHERTHSNDKPYKYNECGEAFLWTTYSNEKIDTDETL</sequence>
<comment type="function">
    <text>May be involved in transcriptional regulation.</text>
</comment>
<comment type="subcellular location">
    <subcellularLocation>
        <location evidence="6">Nucleus</location>
    </subcellularLocation>
</comment>
<comment type="tissue specificity">
    <text evidence="3">Detected in prostate, testis, and pancreas.</text>
</comment>
<comment type="similarity">
    <text evidence="6">Belongs to the krueppel C2H2-type zinc-finger protein family.</text>
</comment>
<comment type="sequence caution" evidence="6">
    <conflict type="miscellaneous discrepancy">
        <sequence resource="EMBL-CDS" id="BAC05251"/>
    </conflict>
    <text>Compared to the genome, the sequence lacks 6 bp for unexplained reasons.</text>
</comment>
<evidence type="ECO:0000255" key="1">
    <source>
        <dbReference type="PROSITE-ProRule" id="PRU00042"/>
    </source>
</evidence>
<evidence type="ECO:0000255" key="2">
    <source>
        <dbReference type="PROSITE-ProRule" id="PRU00119"/>
    </source>
</evidence>
<evidence type="ECO:0000269" key="3">
    <source>
    </source>
</evidence>
<evidence type="ECO:0000269" key="4">
    <source>
    </source>
</evidence>
<evidence type="ECO:0000269" key="5">
    <source>
    </source>
</evidence>
<evidence type="ECO:0000305" key="6"/>
<evidence type="ECO:0007744" key="7">
    <source>
    </source>
</evidence>
<feature type="chain" id="PRO_0000047507" description="Zinc finger protein 283">
    <location>
        <begin position="1"/>
        <end position="679"/>
    </location>
</feature>
<feature type="domain" description="KRAB" evidence="2">
    <location>
        <begin position="73"/>
        <end position="152"/>
    </location>
</feature>
<feature type="zinc finger region" description="C2H2-type 1" evidence="1">
    <location>
        <begin position="205"/>
        <end position="227"/>
    </location>
</feature>
<feature type="zinc finger region" description="C2H2-type 2" evidence="1">
    <location>
        <begin position="233"/>
        <end position="255"/>
    </location>
</feature>
<feature type="zinc finger region" description="C2H2-type 3" evidence="1">
    <location>
        <begin position="261"/>
        <end position="283"/>
    </location>
</feature>
<feature type="zinc finger region" description="C2H2-type 4" evidence="1">
    <location>
        <begin position="289"/>
        <end position="311"/>
    </location>
</feature>
<feature type="zinc finger region" description="C2H2-type 5" evidence="1">
    <location>
        <begin position="317"/>
        <end position="339"/>
    </location>
</feature>
<feature type="zinc finger region" description="C2H2-type 6" evidence="1">
    <location>
        <begin position="345"/>
        <end position="367"/>
    </location>
</feature>
<feature type="zinc finger region" description="C2H2-type 7" evidence="1">
    <location>
        <begin position="373"/>
        <end position="395"/>
    </location>
</feature>
<feature type="zinc finger region" description="C2H2-type 8" evidence="1">
    <location>
        <begin position="401"/>
        <end position="423"/>
    </location>
</feature>
<feature type="zinc finger region" description="C2H2-type 9" evidence="1">
    <location>
        <begin position="429"/>
        <end position="451"/>
    </location>
</feature>
<feature type="zinc finger region" description="C2H2-type 10" evidence="1">
    <location>
        <begin position="457"/>
        <end position="479"/>
    </location>
</feature>
<feature type="zinc finger region" description="C2H2-type 11" evidence="1">
    <location>
        <begin position="485"/>
        <end position="507"/>
    </location>
</feature>
<feature type="zinc finger region" description="C2H2-type 12" evidence="1">
    <location>
        <begin position="513"/>
        <end position="535"/>
    </location>
</feature>
<feature type="zinc finger region" description="C2H2-type 13" evidence="1">
    <location>
        <begin position="541"/>
        <end position="563"/>
    </location>
</feature>
<feature type="zinc finger region" description="C2H2-type 14" evidence="1">
    <location>
        <begin position="569"/>
        <end position="591"/>
    </location>
</feature>
<feature type="zinc finger region" description="C2H2-type 15" evidence="1">
    <location>
        <begin position="597"/>
        <end position="619"/>
    </location>
</feature>
<feature type="cross-link" description="Glycyl lysine isopeptide (Lys-Gly) (interchain with G-Cter in SUMO2)" evidence="7">
    <location>
        <position position="280"/>
    </location>
</feature>
<feature type="cross-link" description="Glycyl lysine isopeptide (Lys-Gly) (interchain with G-Cter in SUMO2)" evidence="7">
    <location>
        <position position="476"/>
    </location>
</feature>
<feature type="cross-link" description="Glycyl lysine isopeptide (Lys-Gly) (interchain with G-Cter in SUMO2)" evidence="7">
    <location>
        <position position="588"/>
    </location>
</feature>
<feature type="sequence variant" id="VAR_060605" description="In dbSNP:rs2195980." evidence="4 5">
    <original>T</original>
    <variation>I</variation>
    <location>
        <position position="314"/>
    </location>
</feature>
<feature type="sequence variant" id="VAR_057416" description="In dbSNP:rs1061768.">
    <original>R</original>
    <variation>H</variation>
    <location>
        <position position="629"/>
    </location>
</feature>
<feature type="sequence variant" id="VAR_060606" description="In dbSNP:rs2356437.">
    <original>C</original>
    <variation>R</variation>
    <location>
        <position position="638"/>
    </location>
</feature>
<feature type="sequence variant" id="VAR_060607" description="In dbSNP:rs1061769.">
    <original>C</original>
    <variation>Y</variation>
    <location>
        <position position="638"/>
    </location>
</feature>
<feature type="sequence variant" id="VAR_057417" description="In dbSNP:rs10417624.">
    <original>R</original>
    <variation>I</variation>
    <location>
        <position position="646"/>
    </location>
</feature>
<feature type="sequence conflict" description="In Ref. 1; BAG57956." evidence="6" ref="1">
    <location>
        <begin position="139"/>
        <end position="140"/>
    </location>
</feature>
<feature type="sequence conflict" description="In Ref. 4; AAS55109." evidence="6" ref="4">
    <original>E</original>
    <variation>R</variation>
    <location>
        <position position="172"/>
    </location>
</feature>
<feature type="sequence conflict" description="In Ref. 4; AAS55109." evidence="6" ref="4">
    <original>E</original>
    <variation>K</variation>
    <location>
        <position position="432"/>
    </location>
</feature>
<feature type="sequence conflict" description="In Ref. 1; BAC05251/BAG57956 and 4; AAS55109." evidence="6" ref="1 4">
    <original>C</original>
    <variation>H</variation>
    <location>
        <position position="638"/>
    </location>
</feature>
<accession>Q8N7M2</accession>
<accession>B4DGZ5</accession>
<accession>B7WP04</accession>
<accession>Q6RFR9</accession>
<accession>Q86WM6</accession>
<keyword id="KW-0238">DNA-binding</keyword>
<keyword id="KW-1017">Isopeptide bond</keyword>
<keyword id="KW-0479">Metal-binding</keyword>
<keyword id="KW-0539">Nucleus</keyword>
<keyword id="KW-1267">Proteomics identification</keyword>
<keyword id="KW-1185">Reference proteome</keyword>
<keyword id="KW-0677">Repeat</keyword>
<keyword id="KW-0804">Transcription</keyword>
<keyword id="KW-0805">Transcription regulation</keyword>
<keyword id="KW-0832">Ubl conjugation</keyword>
<keyword id="KW-0862">Zinc</keyword>
<keyword id="KW-0863">Zinc-finger</keyword>
<gene>
    <name type="primary">ZNF283</name>
</gene>
<proteinExistence type="evidence at protein level"/>
<dbReference type="EMBL" id="AK098175">
    <property type="protein sequence ID" value="BAC05251.1"/>
    <property type="status" value="ALT_SEQ"/>
    <property type="molecule type" value="mRNA"/>
</dbReference>
<dbReference type="EMBL" id="AK294852">
    <property type="protein sequence ID" value="BAG57956.1"/>
    <property type="molecule type" value="mRNA"/>
</dbReference>
<dbReference type="EMBL" id="AC011508">
    <property type="status" value="NOT_ANNOTATED_CDS"/>
    <property type="molecule type" value="Genomic_DNA"/>
</dbReference>
<dbReference type="EMBL" id="AY166784">
    <property type="protein sequence ID" value="AAO45833.1"/>
    <property type="molecule type" value="mRNA"/>
</dbReference>
<dbReference type="EMBL" id="AY500359">
    <property type="protein sequence ID" value="AAS55109.1"/>
    <property type="molecule type" value="mRNA"/>
</dbReference>
<dbReference type="CCDS" id="CCDS46097.1"/>
<dbReference type="RefSeq" id="NP_001284681.1">
    <property type="nucleotide sequence ID" value="NM_001297752.1"/>
</dbReference>
<dbReference type="RefSeq" id="NP_862828.1">
    <property type="nucleotide sequence ID" value="NM_181845.2"/>
</dbReference>
<dbReference type="RefSeq" id="XP_016882117.1">
    <property type="nucleotide sequence ID" value="XM_017026628.1"/>
</dbReference>
<dbReference type="RefSeq" id="XP_016882118.1">
    <property type="nucleotide sequence ID" value="XM_017026629.1"/>
</dbReference>
<dbReference type="RefSeq" id="XP_016882119.1">
    <property type="nucleotide sequence ID" value="XM_017026630.1"/>
</dbReference>
<dbReference type="RefSeq" id="XP_016882120.1">
    <property type="nucleotide sequence ID" value="XM_017026631.1"/>
</dbReference>
<dbReference type="SMR" id="Q8N7M2"/>
<dbReference type="BioGRID" id="129837">
    <property type="interactions" value="1"/>
</dbReference>
<dbReference type="FunCoup" id="Q8N7M2">
    <property type="interactions" value="29"/>
</dbReference>
<dbReference type="IntAct" id="Q8N7M2">
    <property type="interactions" value="16"/>
</dbReference>
<dbReference type="STRING" id="9606.ENSP00000484852"/>
<dbReference type="iPTMnet" id="Q8N7M2"/>
<dbReference type="PhosphoSitePlus" id="Q8N7M2"/>
<dbReference type="BioMuta" id="ZNF283"/>
<dbReference type="DMDM" id="269849746"/>
<dbReference type="jPOST" id="Q8N7M2"/>
<dbReference type="MassIVE" id="Q8N7M2"/>
<dbReference type="PaxDb" id="9606-ENSP00000484852"/>
<dbReference type="PeptideAtlas" id="Q8N7M2"/>
<dbReference type="ProteomicsDB" id="72307"/>
<dbReference type="Antibodypedia" id="29840">
    <property type="antibodies" value="7 antibodies from 6 providers"/>
</dbReference>
<dbReference type="DNASU" id="284349"/>
<dbReference type="Ensembl" id="ENST00000324461.9">
    <property type="protein sequence ID" value="ENSP00000327314.7"/>
    <property type="gene ID" value="ENSG00000167637.18"/>
</dbReference>
<dbReference type="Ensembl" id="ENST00000618787.5">
    <property type="protein sequence ID" value="ENSP00000484852.1"/>
    <property type="gene ID" value="ENSG00000167637.18"/>
</dbReference>
<dbReference type="GeneID" id="284349"/>
<dbReference type="KEGG" id="hsa:284349"/>
<dbReference type="MANE-Select" id="ENST00000618787.5">
    <property type="protein sequence ID" value="ENSP00000484852.1"/>
    <property type="RefSeq nucleotide sequence ID" value="NM_181845.2"/>
    <property type="RefSeq protein sequence ID" value="NP_862828.1"/>
</dbReference>
<dbReference type="UCSC" id="uc002oxr.5">
    <property type="organism name" value="human"/>
</dbReference>
<dbReference type="AGR" id="HGNC:13077"/>
<dbReference type="CTD" id="284349"/>
<dbReference type="DisGeNET" id="284349"/>
<dbReference type="GeneCards" id="ZNF283"/>
<dbReference type="HGNC" id="HGNC:13077">
    <property type="gene designation" value="ZNF283"/>
</dbReference>
<dbReference type="HPA" id="ENSG00000167637">
    <property type="expression patterns" value="Low tissue specificity"/>
</dbReference>
<dbReference type="neXtProt" id="NX_Q8N7M2"/>
<dbReference type="OpenTargets" id="ENSG00000167637"/>
<dbReference type="PharmGKB" id="PA37653"/>
<dbReference type="VEuPathDB" id="HostDB:ENSG00000167637"/>
<dbReference type="eggNOG" id="KOG1721">
    <property type="taxonomic scope" value="Eukaryota"/>
</dbReference>
<dbReference type="GeneTree" id="ENSGT00940000161267"/>
<dbReference type="HOGENOM" id="CLU_002678_17_1_1"/>
<dbReference type="InParanoid" id="Q8N7M2"/>
<dbReference type="OMA" id="EKYYECR"/>
<dbReference type="OrthoDB" id="1405595at2759"/>
<dbReference type="PAN-GO" id="Q8N7M2">
    <property type="GO annotations" value="4 GO annotations based on evolutionary models"/>
</dbReference>
<dbReference type="PhylomeDB" id="Q8N7M2"/>
<dbReference type="TreeFam" id="TF341817"/>
<dbReference type="PathwayCommons" id="Q8N7M2"/>
<dbReference type="SignaLink" id="Q8N7M2"/>
<dbReference type="BioGRID-ORCS" id="284349">
    <property type="hits" value="29 hits in 1184 CRISPR screens"/>
</dbReference>
<dbReference type="ChiTaRS" id="ZNF283">
    <property type="organism name" value="human"/>
</dbReference>
<dbReference type="GenomeRNAi" id="284349"/>
<dbReference type="Pharos" id="Q8N7M2">
    <property type="development level" value="Tdark"/>
</dbReference>
<dbReference type="PRO" id="PR:Q8N7M2"/>
<dbReference type="Proteomes" id="UP000005640">
    <property type="component" value="Chromosome 19"/>
</dbReference>
<dbReference type="RNAct" id="Q8N7M2">
    <property type="molecule type" value="protein"/>
</dbReference>
<dbReference type="Bgee" id="ENSG00000167637">
    <property type="expression patterns" value="Expressed in adrenal tissue and 114 other cell types or tissues"/>
</dbReference>
<dbReference type="ExpressionAtlas" id="Q8N7M2">
    <property type="expression patterns" value="baseline and differential"/>
</dbReference>
<dbReference type="GO" id="GO:0005634">
    <property type="term" value="C:nucleus"/>
    <property type="evidence" value="ECO:0000318"/>
    <property type="project" value="GO_Central"/>
</dbReference>
<dbReference type="GO" id="GO:0000981">
    <property type="term" value="F:DNA-binding transcription factor activity, RNA polymerase II-specific"/>
    <property type="evidence" value="ECO:0000318"/>
    <property type="project" value="GO_Central"/>
</dbReference>
<dbReference type="GO" id="GO:0000978">
    <property type="term" value="F:RNA polymerase II cis-regulatory region sequence-specific DNA binding"/>
    <property type="evidence" value="ECO:0000318"/>
    <property type="project" value="GO_Central"/>
</dbReference>
<dbReference type="GO" id="GO:0008270">
    <property type="term" value="F:zinc ion binding"/>
    <property type="evidence" value="ECO:0007669"/>
    <property type="project" value="UniProtKB-KW"/>
</dbReference>
<dbReference type="GO" id="GO:0006357">
    <property type="term" value="P:regulation of transcription by RNA polymerase II"/>
    <property type="evidence" value="ECO:0000318"/>
    <property type="project" value="GO_Central"/>
</dbReference>
<dbReference type="CDD" id="cd07765">
    <property type="entry name" value="KRAB_A-box"/>
    <property type="match status" value="1"/>
</dbReference>
<dbReference type="FunFam" id="3.30.160.60:FF:000053">
    <property type="entry name" value="zinc finger protein 182 isoform X1"/>
    <property type="match status" value="4"/>
</dbReference>
<dbReference type="FunFam" id="3.30.160.60:FF:001425">
    <property type="entry name" value="Zinc finger protein 331"/>
    <property type="match status" value="2"/>
</dbReference>
<dbReference type="FunFam" id="3.30.160.60:FF:000016">
    <property type="entry name" value="zinc finger protein 37 homolog"/>
    <property type="match status" value="1"/>
</dbReference>
<dbReference type="FunFam" id="3.30.160.60:FF:000044">
    <property type="entry name" value="zinc finger protein 37 homolog"/>
    <property type="match status" value="1"/>
</dbReference>
<dbReference type="FunFam" id="3.30.160.60:FF:000338">
    <property type="entry name" value="zinc finger protein 383"/>
    <property type="match status" value="1"/>
</dbReference>
<dbReference type="FunFam" id="3.30.160.60:FF:002090">
    <property type="entry name" value="Zinc finger protein 473"/>
    <property type="match status" value="1"/>
</dbReference>
<dbReference type="FunFam" id="3.30.160.60:FF:000238">
    <property type="entry name" value="Zinc finger protein 485"/>
    <property type="match status" value="1"/>
</dbReference>
<dbReference type="FunFam" id="3.30.160.60:FF:002254">
    <property type="entry name" value="Zinc finger protein 540"/>
    <property type="match status" value="2"/>
</dbReference>
<dbReference type="FunFam" id="3.30.160.60:FF:000737">
    <property type="entry name" value="Zinc finger protein 565"/>
    <property type="match status" value="1"/>
</dbReference>
<dbReference type="FunFam" id="3.30.160.60:FF:000344">
    <property type="entry name" value="zinc finger protein 90 homolog"/>
    <property type="match status" value="1"/>
</dbReference>
<dbReference type="Gene3D" id="6.10.140.140">
    <property type="match status" value="1"/>
</dbReference>
<dbReference type="Gene3D" id="3.30.160.60">
    <property type="entry name" value="Classic Zinc Finger"/>
    <property type="match status" value="16"/>
</dbReference>
<dbReference type="InterPro" id="IPR001909">
    <property type="entry name" value="KRAB"/>
</dbReference>
<dbReference type="InterPro" id="IPR036051">
    <property type="entry name" value="KRAB_dom_sf"/>
</dbReference>
<dbReference type="InterPro" id="IPR036236">
    <property type="entry name" value="Znf_C2H2_sf"/>
</dbReference>
<dbReference type="InterPro" id="IPR013087">
    <property type="entry name" value="Znf_C2H2_type"/>
</dbReference>
<dbReference type="PANTHER" id="PTHR24399:SF75">
    <property type="entry name" value="ZFP14 ZINC FINGER PROTEIN-RELATED"/>
    <property type="match status" value="1"/>
</dbReference>
<dbReference type="PANTHER" id="PTHR24399">
    <property type="entry name" value="ZINC FINGER AND BTB DOMAIN-CONTAINING"/>
    <property type="match status" value="1"/>
</dbReference>
<dbReference type="Pfam" id="PF01352">
    <property type="entry name" value="KRAB"/>
    <property type="match status" value="1"/>
</dbReference>
<dbReference type="Pfam" id="PF00096">
    <property type="entry name" value="zf-C2H2"/>
    <property type="match status" value="11"/>
</dbReference>
<dbReference type="Pfam" id="PF13912">
    <property type="entry name" value="zf-C2H2_6"/>
    <property type="match status" value="2"/>
</dbReference>
<dbReference type="SMART" id="SM00349">
    <property type="entry name" value="KRAB"/>
    <property type="match status" value="1"/>
</dbReference>
<dbReference type="SMART" id="SM00355">
    <property type="entry name" value="ZnF_C2H2"/>
    <property type="match status" value="15"/>
</dbReference>
<dbReference type="SUPFAM" id="SSF57667">
    <property type="entry name" value="beta-beta-alpha zinc fingers"/>
    <property type="match status" value="9"/>
</dbReference>
<dbReference type="SUPFAM" id="SSF109640">
    <property type="entry name" value="KRAB domain (Kruppel-associated box)"/>
    <property type="match status" value="1"/>
</dbReference>
<dbReference type="PROSITE" id="PS50805">
    <property type="entry name" value="KRAB"/>
    <property type="match status" value="1"/>
</dbReference>
<dbReference type="PROSITE" id="PS00028">
    <property type="entry name" value="ZINC_FINGER_C2H2_1"/>
    <property type="match status" value="15"/>
</dbReference>
<dbReference type="PROSITE" id="PS50157">
    <property type="entry name" value="ZINC_FINGER_C2H2_2"/>
    <property type="match status" value="15"/>
</dbReference>
<reference key="1">
    <citation type="journal article" date="2004" name="Nat. Genet.">
        <title>Complete sequencing and characterization of 21,243 full-length human cDNAs.</title>
        <authorList>
            <person name="Ota T."/>
            <person name="Suzuki Y."/>
            <person name="Nishikawa T."/>
            <person name="Otsuki T."/>
            <person name="Sugiyama T."/>
            <person name="Irie R."/>
            <person name="Wakamatsu A."/>
            <person name="Hayashi K."/>
            <person name="Sato H."/>
            <person name="Nagai K."/>
            <person name="Kimura K."/>
            <person name="Makita H."/>
            <person name="Sekine M."/>
            <person name="Obayashi M."/>
            <person name="Nishi T."/>
            <person name="Shibahara T."/>
            <person name="Tanaka T."/>
            <person name="Ishii S."/>
            <person name="Yamamoto J."/>
            <person name="Saito K."/>
            <person name="Kawai Y."/>
            <person name="Isono Y."/>
            <person name="Nakamura Y."/>
            <person name="Nagahari K."/>
            <person name="Murakami K."/>
            <person name="Yasuda T."/>
            <person name="Iwayanagi T."/>
            <person name="Wagatsuma M."/>
            <person name="Shiratori A."/>
            <person name="Sudo H."/>
            <person name="Hosoiri T."/>
            <person name="Kaku Y."/>
            <person name="Kodaira H."/>
            <person name="Kondo H."/>
            <person name="Sugawara M."/>
            <person name="Takahashi M."/>
            <person name="Kanda K."/>
            <person name="Yokoi T."/>
            <person name="Furuya T."/>
            <person name="Kikkawa E."/>
            <person name="Omura Y."/>
            <person name="Abe K."/>
            <person name="Kamihara K."/>
            <person name="Katsuta N."/>
            <person name="Sato K."/>
            <person name="Tanikawa M."/>
            <person name="Yamazaki M."/>
            <person name="Ninomiya K."/>
            <person name="Ishibashi T."/>
            <person name="Yamashita H."/>
            <person name="Murakawa K."/>
            <person name="Fujimori K."/>
            <person name="Tanai H."/>
            <person name="Kimata M."/>
            <person name="Watanabe M."/>
            <person name="Hiraoka S."/>
            <person name="Chiba Y."/>
            <person name="Ishida S."/>
            <person name="Ono Y."/>
            <person name="Takiguchi S."/>
            <person name="Watanabe S."/>
            <person name="Yosida M."/>
            <person name="Hotuta T."/>
            <person name="Kusano J."/>
            <person name="Kanehori K."/>
            <person name="Takahashi-Fujii A."/>
            <person name="Hara H."/>
            <person name="Tanase T.-O."/>
            <person name="Nomura Y."/>
            <person name="Togiya S."/>
            <person name="Komai F."/>
            <person name="Hara R."/>
            <person name="Takeuchi K."/>
            <person name="Arita M."/>
            <person name="Imose N."/>
            <person name="Musashino K."/>
            <person name="Yuuki H."/>
            <person name="Oshima A."/>
            <person name="Sasaki N."/>
            <person name="Aotsuka S."/>
            <person name="Yoshikawa Y."/>
            <person name="Matsunawa H."/>
            <person name="Ichihara T."/>
            <person name="Shiohata N."/>
            <person name="Sano S."/>
            <person name="Moriya S."/>
            <person name="Momiyama H."/>
            <person name="Satoh N."/>
            <person name="Takami S."/>
            <person name="Terashima Y."/>
            <person name="Suzuki O."/>
            <person name="Nakagawa S."/>
            <person name="Senoh A."/>
            <person name="Mizoguchi H."/>
            <person name="Goto Y."/>
            <person name="Shimizu F."/>
            <person name="Wakebe H."/>
            <person name="Hishigaki H."/>
            <person name="Watanabe T."/>
            <person name="Sugiyama A."/>
            <person name="Takemoto M."/>
            <person name="Kawakami B."/>
            <person name="Yamazaki M."/>
            <person name="Watanabe K."/>
            <person name="Kumagai A."/>
            <person name="Itakura S."/>
            <person name="Fukuzumi Y."/>
            <person name="Fujimori Y."/>
            <person name="Komiyama M."/>
            <person name="Tashiro H."/>
            <person name="Tanigami A."/>
            <person name="Fujiwara T."/>
            <person name="Ono T."/>
            <person name="Yamada K."/>
            <person name="Fujii Y."/>
            <person name="Ozaki K."/>
            <person name="Hirao M."/>
            <person name="Ohmori Y."/>
            <person name="Kawabata A."/>
            <person name="Hikiji T."/>
            <person name="Kobatake N."/>
            <person name="Inagaki H."/>
            <person name="Ikema Y."/>
            <person name="Okamoto S."/>
            <person name="Okitani R."/>
            <person name="Kawakami T."/>
            <person name="Noguchi S."/>
            <person name="Itoh T."/>
            <person name="Shigeta K."/>
            <person name="Senba T."/>
            <person name="Matsumura K."/>
            <person name="Nakajima Y."/>
            <person name="Mizuno T."/>
            <person name="Morinaga M."/>
            <person name="Sasaki M."/>
            <person name="Togashi T."/>
            <person name="Oyama M."/>
            <person name="Hata H."/>
            <person name="Watanabe M."/>
            <person name="Komatsu T."/>
            <person name="Mizushima-Sugano J."/>
            <person name="Satoh T."/>
            <person name="Shirai Y."/>
            <person name="Takahashi Y."/>
            <person name="Nakagawa K."/>
            <person name="Okumura K."/>
            <person name="Nagase T."/>
            <person name="Nomura N."/>
            <person name="Kikuchi H."/>
            <person name="Masuho Y."/>
            <person name="Yamashita R."/>
            <person name="Nakai K."/>
            <person name="Yada T."/>
            <person name="Nakamura Y."/>
            <person name="Ohara O."/>
            <person name="Isogai T."/>
            <person name="Sugano S."/>
        </authorList>
    </citation>
    <scope>NUCLEOTIDE SEQUENCE [LARGE SCALE MRNA]</scope>
    <scope>VARIANT ILE-314</scope>
    <source>
        <tissue>Brain</tissue>
        <tissue>Trachea</tissue>
    </source>
</reference>
<reference key="2">
    <citation type="journal article" date="2004" name="Nature">
        <title>The DNA sequence and biology of human chromosome 19.</title>
        <authorList>
            <person name="Grimwood J."/>
            <person name="Gordon L.A."/>
            <person name="Olsen A.S."/>
            <person name="Terry A."/>
            <person name="Schmutz J."/>
            <person name="Lamerdin J.E."/>
            <person name="Hellsten U."/>
            <person name="Goodstein D."/>
            <person name="Couronne O."/>
            <person name="Tran-Gyamfi M."/>
            <person name="Aerts A."/>
            <person name="Altherr M."/>
            <person name="Ashworth L."/>
            <person name="Bajorek E."/>
            <person name="Black S."/>
            <person name="Branscomb E."/>
            <person name="Caenepeel S."/>
            <person name="Carrano A.V."/>
            <person name="Caoile C."/>
            <person name="Chan Y.M."/>
            <person name="Christensen M."/>
            <person name="Cleland C.A."/>
            <person name="Copeland A."/>
            <person name="Dalin E."/>
            <person name="Dehal P."/>
            <person name="Denys M."/>
            <person name="Detter J.C."/>
            <person name="Escobar J."/>
            <person name="Flowers D."/>
            <person name="Fotopulos D."/>
            <person name="Garcia C."/>
            <person name="Georgescu A.M."/>
            <person name="Glavina T."/>
            <person name="Gomez M."/>
            <person name="Gonzales E."/>
            <person name="Groza M."/>
            <person name="Hammon N."/>
            <person name="Hawkins T."/>
            <person name="Haydu L."/>
            <person name="Ho I."/>
            <person name="Huang W."/>
            <person name="Israni S."/>
            <person name="Jett J."/>
            <person name="Kadner K."/>
            <person name="Kimball H."/>
            <person name="Kobayashi A."/>
            <person name="Larionov V."/>
            <person name="Leem S.-H."/>
            <person name="Lopez F."/>
            <person name="Lou Y."/>
            <person name="Lowry S."/>
            <person name="Malfatti S."/>
            <person name="Martinez D."/>
            <person name="McCready P.M."/>
            <person name="Medina C."/>
            <person name="Morgan J."/>
            <person name="Nelson K."/>
            <person name="Nolan M."/>
            <person name="Ovcharenko I."/>
            <person name="Pitluck S."/>
            <person name="Pollard M."/>
            <person name="Popkie A.P."/>
            <person name="Predki P."/>
            <person name="Quan G."/>
            <person name="Ramirez L."/>
            <person name="Rash S."/>
            <person name="Retterer J."/>
            <person name="Rodriguez A."/>
            <person name="Rogers S."/>
            <person name="Salamov A."/>
            <person name="Salazar A."/>
            <person name="She X."/>
            <person name="Smith D."/>
            <person name="Slezak T."/>
            <person name="Solovyev V."/>
            <person name="Thayer N."/>
            <person name="Tice H."/>
            <person name="Tsai M."/>
            <person name="Ustaszewska A."/>
            <person name="Vo N."/>
            <person name="Wagner M."/>
            <person name="Wheeler J."/>
            <person name="Wu K."/>
            <person name="Xie G."/>
            <person name="Yang J."/>
            <person name="Dubchak I."/>
            <person name="Furey T.S."/>
            <person name="DeJong P."/>
            <person name="Dickson M."/>
            <person name="Gordon D."/>
            <person name="Eichler E.E."/>
            <person name="Pennacchio L.A."/>
            <person name="Richardson P."/>
            <person name="Stubbs L."/>
            <person name="Rokhsar D.S."/>
            <person name="Myers R.M."/>
            <person name="Rubin E.M."/>
            <person name="Lucas S.M."/>
        </authorList>
    </citation>
    <scope>NUCLEOTIDE SEQUENCE [LARGE SCALE GENOMIC DNA]</scope>
</reference>
<reference key="3">
    <citation type="journal article" date="2003" name="Genome Res.">
        <title>Differential expansion of zinc-finger transcription factor loci in homologous human and mouse gene clusters.</title>
        <authorList>
            <person name="Shannon M."/>
            <person name="Hamilton A.T."/>
            <person name="Gordon L."/>
            <person name="Branscomb E."/>
            <person name="Stubbs L."/>
        </authorList>
    </citation>
    <scope>NUCLEOTIDE SEQUENCE [MRNA] OF 85-242</scope>
    <scope>TISSUE SPECIFICITY</scope>
    <source>
        <tissue>Brain</tissue>
    </source>
</reference>
<reference key="4">
    <citation type="journal article" date="1995" name="DNA Cell Biol.">
        <title>Isolation of cDNA clones for 42 different Kruppel-related zinc finger proteins expressed in the human monoblast cell line U-937.</title>
        <authorList>
            <person name="Abrink M."/>
            <person name="Aveskogh M."/>
            <person name="Hellman L."/>
        </authorList>
    </citation>
    <scope>NUCLEOTIDE SEQUENCE [MRNA] OF 172-679</scope>
    <scope>VARIANT ILE-314</scope>
</reference>
<reference key="5">
    <citation type="journal article" date="2017" name="Nat. Struct. Mol. Biol.">
        <title>Site-specific mapping of the human SUMO proteome reveals co-modification with phosphorylation.</title>
        <authorList>
            <person name="Hendriks I.A."/>
            <person name="Lyon D."/>
            <person name="Young C."/>
            <person name="Jensen L.J."/>
            <person name="Vertegaal A.C."/>
            <person name="Nielsen M.L."/>
        </authorList>
    </citation>
    <scope>SUMOYLATION [LARGE SCALE ANALYSIS] AT LYS-280; LYS-476 AND LYS-588</scope>
    <scope>IDENTIFICATION BY MASS SPECTROMETRY [LARGE SCALE ANALYSIS]</scope>
</reference>
<protein>
    <recommendedName>
        <fullName>Zinc finger protein 283</fullName>
    </recommendedName>
    <alternativeName>
        <fullName>Zinc finger protein HZF19</fullName>
    </alternativeName>
</protein>